<evidence type="ECO:0000255" key="1">
    <source>
        <dbReference type="HAMAP-Rule" id="MF_00038"/>
    </source>
</evidence>
<proteinExistence type="inferred from homology"/>
<gene>
    <name evidence="1" type="primary">mraY</name>
    <name type="ordered locus">SPC_0134</name>
</gene>
<name>MRAY_SALPC</name>
<comment type="function">
    <text evidence="1">Catalyzes the initial step of the lipid cycle reactions in the biosynthesis of the cell wall peptidoglycan: transfers peptidoglycan precursor phospho-MurNAc-pentapeptide from UDP-MurNAc-pentapeptide onto the lipid carrier undecaprenyl phosphate, yielding undecaprenyl-pyrophosphoryl-MurNAc-pentapeptide, known as lipid I.</text>
</comment>
<comment type="catalytic activity">
    <reaction evidence="1">
        <text>UDP-N-acetyl-alpha-D-muramoyl-L-alanyl-gamma-D-glutamyl-meso-2,6-diaminopimeloyl-D-alanyl-D-alanine + di-trans,octa-cis-undecaprenyl phosphate = di-trans,octa-cis-undecaprenyl diphospho-N-acetyl-alpha-D-muramoyl-L-alanyl-D-glutamyl-meso-2,6-diaminopimeloyl-D-alanyl-D-alanine + UMP</text>
        <dbReference type="Rhea" id="RHEA:28386"/>
        <dbReference type="ChEBI" id="CHEBI:57865"/>
        <dbReference type="ChEBI" id="CHEBI:60392"/>
        <dbReference type="ChEBI" id="CHEBI:61386"/>
        <dbReference type="ChEBI" id="CHEBI:61387"/>
        <dbReference type="EC" id="2.7.8.13"/>
    </reaction>
</comment>
<comment type="cofactor">
    <cofactor evidence="1">
        <name>Mg(2+)</name>
        <dbReference type="ChEBI" id="CHEBI:18420"/>
    </cofactor>
</comment>
<comment type="pathway">
    <text evidence="1">Cell wall biogenesis; peptidoglycan biosynthesis.</text>
</comment>
<comment type="subcellular location">
    <subcellularLocation>
        <location evidence="1">Cell inner membrane</location>
        <topology evidence="1">Multi-pass membrane protein</topology>
    </subcellularLocation>
</comment>
<comment type="similarity">
    <text evidence="1">Belongs to the glycosyltransferase 4 family. MraY subfamily.</text>
</comment>
<dbReference type="EC" id="2.7.8.13" evidence="1"/>
<dbReference type="EMBL" id="CP000857">
    <property type="protein sequence ID" value="ACN44325.1"/>
    <property type="molecule type" value="Genomic_DNA"/>
</dbReference>
<dbReference type="RefSeq" id="WP_000964140.1">
    <property type="nucleotide sequence ID" value="NC_012125.1"/>
</dbReference>
<dbReference type="SMR" id="C0Q5I3"/>
<dbReference type="KEGG" id="sei:SPC_0134"/>
<dbReference type="HOGENOM" id="CLU_023982_0_0_6"/>
<dbReference type="UniPathway" id="UPA00219"/>
<dbReference type="Proteomes" id="UP000001599">
    <property type="component" value="Chromosome"/>
</dbReference>
<dbReference type="GO" id="GO:0005886">
    <property type="term" value="C:plasma membrane"/>
    <property type="evidence" value="ECO:0007669"/>
    <property type="project" value="UniProtKB-SubCell"/>
</dbReference>
<dbReference type="GO" id="GO:0046872">
    <property type="term" value="F:metal ion binding"/>
    <property type="evidence" value="ECO:0007669"/>
    <property type="project" value="UniProtKB-KW"/>
</dbReference>
<dbReference type="GO" id="GO:0008963">
    <property type="term" value="F:phospho-N-acetylmuramoyl-pentapeptide-transferase activity"/>
    <property type="evidence" value="ECO:0007669"/>
    <property type="project" value="UniProtKB-UniRule"/>
</dbReference>
<dbReference type="GO" id="GO:0051992">
    <property type="term" value="F:UDP-N-acetylmuramoyl-L-alanyl-D-glutamyl-meso-2,6-diaminopimelyl-D-alanyl-D-alanine:undecaprenyl-phosphate transferase activity"/>
    <property type="evidence" value="ECO:0007669"/>
    <property type="project" value="RHEA"/>
</dbReference>
<dbReference type="GO" id="GO:0051301">
    <property type="term" value="P:cell division"/>
    <property type="evidence" value="ECO:0007669"/>
    <property type="project" value="UniProtKB-KW"/>
</dbReference>
<dbReference type="GO" id="GO:0071555">
    <property type="term" value="P:cell wall organization"/>
    <property type="evidence" value="ECO:0007669"/>
    <property type="project" value="UniProtKB-KW"/>
</dbReference>
<dbReference type="GO" id="GO:0009252">
    <property type="term" value="P:peptidoglycan biosynthetic process"/>
    <property type="evidence" value="ECO:0007669"/>
    <property type="project" value="UniProtKB-UniRule"/>
</dbReference>
<dbReference type="GO" id="GO:0008360">
    <property type="term" value="P:regulation of cell shape"/>
    <property type="evidence" value="ECO:0007669"/>
    <property type="project" value="UniProtKB-KW"/>
</dbReference>
<dbReference type="CDD" id="cd06852">
    <property type="entry name" value="GT_MraY"/>
    <property type="match status" value="1"/>
</dbReference>
<dbReference type="HAMAP" id="MF_00038">
    <property type="entry name" value="MraY"/>
    <property type="match status" value="1"/>
</dbReference>
<dbReference type="InterPro" id="IPR000715">
    <property type="entry name" value="Glycosyl_transferase_4"/>
</dbReference>
<dbReference type="InterPro" id="IPR003524">
    <property type="entry name" value="PNAcMuramoyl-5peptid_Trfase"/>
</dbReference>
<dbReference type="InterPro" id="IPR018480">
    <property type="entry name" value="PNAcMuramoyl-5peptid_Trfase_CS"/>
</dbReference>
<dbReference type="NCBIfam" id="TIGR00445">
    <property type="entry name" value="mraY"/>
    <property type="match status" value="1"/>
</dbReference>
<dbReference type="PANTHER" id="PTHR22926">
    <property type="entry name" value="PHOSPHO-N-ACETYLMURAMOYL-PENTAPEPTIDE-TRANSFERASE"/>
    <property type="match status" value="1"/>
</dbReference>
<dbReference type="PANTHER" id="PTHR22926:SF5">
    <property type="entry name" value="PHOSPHO-N-ACETYLMURAMOYL-PENTAPEPTIDE-TRANSFERASE HOMOLOG"/>
    <property type="match status" value="1"/>
</dbReference>
<dbReference type="Pfam" id="PF00953">
    <property type="entry name" value="Glycos_transf_4"/>
    <property type="match status" value="1"/>
</dbReference>
<dbReference type="Pfam" id="PF10555">
    <property type="entry name" value="MraY_sig1"/>
    <property type="match status" value="1"/>
</dbReference>
<dbReference type="PROSITE" id="PS01347">
    <property type="entry name" value="MRAY_1"/>
    <property type="match status" value="1"/>
</dbReference>
<dbReference type="PROSITE" id="PS01348">
    <property type="entry name" value="MRAY_2"/>
    <property type="match status" value="1"/>
</dbReference>
<reference key="1">
    <citation type="journal article" date="2009" name="PLoS ONE">
        <title>Salmonella paratyphi C: genetic divergence from Salmonella choleraesuis and pathogenic convergence with Salmonella typhi.</title>
        <authorList>
            <person name="Liu W.-Q."/>
            <person name="Feng Y."/>
            <person name="Wang Y."/>
            <person name="Zou Q.-H."/>
            <person name="Chen F."/>
            <person name="Guo J.-T."/>
            <person name="Peng Y.-H."/>
            <person name="Jin Y."/>
            <person name="Li Y.-G."/>
            <person name="Hu S.-N."/>
            <person name="Johnston R.N."/>
            <person name="Liu G.-R."/>
            <person name="Liu S.-L."/>
        </authorList>
    </citation>
    <scope>NUCLEOTIDE SEQUENCE [LARGE SCALE GENOMIC DNA]</scope>
    <source>
        <strain>RKS4594</strain>
    </source>
</reference>
<sequence>MLVWLAEHLVKYYSGFNVFSYLTFRAIVSLLTALFISLWMGPRMIARLQKLSFGQVVRNDGPESHFSKRGTPTMGGIMILTAIVISVLLWAYPSNPYVWCVLVVLIGYGIIGFVDDYRKVVRKDTKGLIARWKYFWMSVIALGVAFALYLVGKDTPVTQLVVPFFKDVMPQLGLFYILLSYFVIVGTGNAVNLTDGLDGLAIMPTVFVAAGFALVAWATGNMNFANYLHIPYLRHAGELVIVCTAIVGAGLGFLWFNTYPAQVFMGDVGSLALGGALGIIAVLLRQEFLLVIMGGVFVVETLSVILQVGSFKLRGQRIFRMAPIHHHYELKGWPEPRVIVRFWIISLMLVLIGLATLKVR</sequence>
<feature type="chain" id="PRO_1000117194" description="Phospho-N-acetylmuramoyl-pentapeptide-transferase">
    <location>
        <begin position="1"/>
        <end position="360"/>
    </location>
</feature>
<feature type="topological domain" description="Periplasmic" evidence="1">
    <location>
        <begin position="1"/>
        <end position="25"/>
    </location>
</feature>
<feature type="transmembrane region" description="Helical" evidence="1">
    <location>
        <begin position="26"/>
        <end position="46"/>
    </location>
</feature>
<feature type="topological domain" description="Cytoplasmic" evidence="1">
    <location>
        <begin position="47"/>
        <end position="71"/>
    </location>
</feature>
<feature type="transmembrane region" description="Helical" evidence="1">
    <location>
        <begin position="72"/>
        <end position="92"/>
    </location>
</feature>
<feature type="topological domain" description="Periplasmic" evidence="1">
    <location>
        <position position="93"/>
    </location>
</feature>
<feature type="transmembrane region" description="Helical" evidence="1">
    <location>
        <begin position="94"/>
        <end position="114"/>
    </location>
</feature>
<feature type="topological domain" description="Cytoplasmic" evidence="1">
    <location>
        <begin position="115"/>
        <end position="131"/>
    </location>
</feature>
<feature type="transmembrane region" description="Helical" evidence="1">
    <location>
        <begin position="132"/>
        <end position="152"/>
    </location>
</feature>
<feature type="topological domain" description="Periplasmic" evidence="1">
    <location>
        <begin position="153"/>
        <end position="167"/>
    </location>
</feature>
<feature type="transmembrane region" description="Helical" evidence="1">
    <location>
        <begin position="168"/>
        <end position="188"/>
    </location>
</feature>
<feature type="topological domain" description="Cytoplasmic" evidence="1">
    <location>
        <begin position="189"/>
        <end position="198"/>
    </location>
</feature>
<feature type="transmembrane region" description="Helical" evidence="1">
    <location>
        <begin position="199"/>
        <end position="219"/>
    </location>
</feature>
<feature type="topological domain" description="Periplasmic" evidence="1">
    <location>
        <begin position="220"/>
        <end position="235"/>
    </location>
</feature>
<feature type="transmembrane region" description="Helical" evidence="1">
    <location>
        <begin position="236"/>
        <end position="256"/>
    </location>
</feature>
<feature type="topological domain" description="Cytoplasmic" evidence="1">
    <location>
        <begin position="257"/>
        <end position="262"/>
    </location>
</feature>
<feature type="transmembrane region" description="Helical" evidence="1">
    <location>
        <begin position="263"/>
        <end position="283"/>
    </location>
</feature>
<feature type="topological domain" description="Periplasmic" evidence="1">
    <location>
        <begin position="284"/>
        <end position="287"/>
    </location>
</feature>
<feature type="transmembrane region" description="Helical" evidence="1">
    <location>
        <begin position="288"/>
        <end position="308"/>
    </location>
</feature>
<feature type="topological domain" description="Cytoplasmic" evidence="1">
    <location>
        <begin position="309"/>
        <end position="337"/>
    </location>
</feature>
<feature type="transmembrane region" description="Helical" evidence="1">
    <location>
        <begin position="338"/>
        <end position="358"/>
    </location>
</feature>
<feature type="topological domain" description="Periplasmic" evidence="1">
    <location>
        <begin position="359"/>
        <end position="360"/>
    </location>
</feature>
<protein>
    <recommendedName>
        <fullName evidence="1">Phospho-N-acetylmuramoyl-pentapeptide-transferase</fullName>
        <ecNumber evidence="1">2.7.8.13</ecNumber>
    </recommendedName>
    <alternativeName>
        <fullName evidence="1">UDP-MurNAc-pentapeptide phosphotransferase</fullName>
    </alternativeName>
</protein>
<keyword id="KW-0131">Cell cycle</keyword>
<keyword id="KW-0132">Cell division</keyword>
<keyword id="KW-0997">Cell inner membrane</keyword>
<keyword id="KW-1003">Cell membrane</keyword>
<keyword id="KW-0133">Cell shape</keyword>
<keyword id="KW-0961">Cell wall biogenesis/degradation</keyword>
<keyword id="KW-0460">Magnesium</keyword>
<keyword id="KW-0472">Membrane</keyword>
<keyword id="KW-0479">Metal-binding</keyword>
<keyword id="KW-0573">Peptidoglycan synthesis</keyword>
<keyword id="KW-0808">Transferase</keyword>
<keyword id="KW-0812">Transmembrane</keyword>
<keyword id="KW-1133">Transmembrane helix</keyword>
<organism>
    <name type="scientific">Salmonella paratyphi C (strain RKS4594)</name>
    <dbReference type="NCBI Taxonomy" id="476213"/>
    <lineage>
        <taxon>Bacteria</taxon>
        <taxon>Pseudomonadati</taxon>
        <taxon>Pseudomonadota</taxon>
        <taxon>Gammaproteobacteria</taxon>
        <taxon>Enterobacterales</taxon>
        <taxon>Enterobacteriaceae</taxon>
        <taxon>Salmonella</taxon>
    </lineage>
</organism>
<accession>C0Q5I3</accession>